<reference key="1">
    <citation type="journal article" date="2005" name="Nature">
        <title>The genome of the social amoeba Dictyostelium discoideum.</title>
        <authorList>
            <person name="Eichinger L."/>
            <person name="Pachebat J.A."/>
            <person name="Gloeckner G."/>
            <person name="Rajandream M.A."/>
            <person name="Sucgang R."/>
            <person name="Berriman M."/>
            <person name="Song J."/>
            <person name="Olsen R."/>
            <person name="Szafranski K."/>
            <person name="Xu Q."/>
            <person name="Tunggal B."/>
            <person name="Kummerfeld S."/>
            <person name="Madera M."/>
            <person name="Konfortov B.A."/>
            <person name="Rivero F."/>
            <person name="Bankier A.T."/>
            <person name="Lehmann R."/>
            <person name="Hamlin N."/>
            <person name="Davies R."/>
            <person name="Gaudet P."/>
            <person name="Fey P."/>
            <person name="Pilcher K."/>
            <person name="Chen G."/>
            <person name="Saunders D."/>
            <person name="Sodergren E.J."/>
            <person name="Davis P."/>
            <person name="Kerhornou A."/>
            <person name="Nie X."/>
            <person name="Hall N."/>
            <person name="Anjard C."/>
            <person name="Hemphill L."/>
            <person name="Bason N."/>
            <person name="Farbrother P."/>
            <person name="Desany B."/>
            <person name="Just E."/>
            <person name="Morio T."/>
            <person name="Rost R."/>
            <person name="Churcher C.M."/>
            <person name="Cooper J."/>
            <person name="Haydock S."/>
            <person name="van Driessche N."/>
            <person name="Cronin A."/>
            <person name="Goodhead I."/>
            <person name="Muzny D.M."/>
            <person name="Mourier T."/>
            <person name="Pain A."/>
            <person name="Lu M."/>
            <person name="Harper D."/>
            <person name="Lindsay R."/>
            <person name="Hauser H."/>
            <person name="James K.D."/>
            <person name="Quiles M."/>
            <person name="Madan Babu M."/>
            <person name="Saito T."/>
            <person name="Buchrieser C."/>
            <person name="Wardroper A."/>
            <person name="Felder M."/>
            <person name="Thangavelu M."/>
            <person name="Johnson D."/>
            <person name="Knights A."/>
            <person name="Loulseged H."/>
            <person name="Mungall K.L."/>
            <person name="Oliver K."/>
            <person name="Price C."/>
            <person name="Quail M.A."/>
            <person name="Urushihara H."/>
            <person name="Hernandez J."/>
            <person name="Rabbinowitsch E."/>
            <person name="Steffen D."/>
            <person name="Sanders M."/>
            <person name="Ma J."/>
            <person name="Kohara Y."/>
            <person name="Sharp S."/>
            <person name="Simmonds M.N."/>
            <person name="Spiegler S."/>
            <person name="Tivey A."/>
            <person name="Sugano S."/>
            <person name="White B."/>
            <person name="Walker D."/>
            <person name="Woodward J.R."/>
            <person name="Winckler T."/>
            <person name="Tanaka Y."/>
            <person name="Shaulsky G."/>
            <person name="Schleicher M."/>
            <person name="Weinstock G.M."/>
            <person name="Rosenthal A."/>
            <person name="Cox E.C."/>
            <person name="Chisholm R.L."/>
            <person name="Gibbs R.A."/>
            <person name="Loomis W.F."/>
            <person name="Platzer M."/>
            <person name="Kay R.R."/>
            <person name="Williams J.G."/>
            <person name="Dear P.H."/>
            <person name="Noegel A.A."/>
            <person name="Barrell B.G."/>
            <person name="Kuspa A."/>
        </authorList>
    </citation>
    <scope>NUCLEOTIDE SEQUENCE [LARGE SCALE GENOMIC DNA]</scope>
    <source>
        <strain>AX4</strain>
    </source>
</reference>
<accession>Q54L00</accession>
<comment type="catalytic activity">
    <reaction>
        <text>L-seryl-[protein] + ATP = O-phospho-L-seryl-[protein] + ADP + H(+)</text>
        <dbReference type="Rhea" id="RHEA:17989"/>
        <dbReference type="Rhea" id="RHEA-COMP:9863"/>
        <dbReference type="Rhea" id="RHEA-COMP:11604"/>
        <dbReference type="ChEBI" id="CHEBI:15378"/>
        <dbReference type="ChEBI" id="CHEBI:29999"/>
        <dbReference type="ChEBI" id="CHEBI:30616"/>
        <dbReference type="ChEBI" id="CHEBI:83421"/>
        <dbReference type="ChEBI" id="CHEBI:456216"/>
        <dbReference type="EC" id="2.7.11.1"/>
    </reaction>
</comment>
<comment type="catalytic activity">
    <reaction>
        <text>L-threonyl-[protein] + ATP = O-phospho-L-threonyl-[protein] + ADP + H(+)</text>
        <dbReference type="Rhea" id="RHEA:46608"/>
        <dbReference type="Rhea" id="RHEA-COMP:11060"/>
        <dbReference type="Rhea" id="RHEA-COMP:11605"/>
        <dbReference type="ChEBI" id="CHEBI:15378"/>
        <dbReference type="ChEBI" id="CHEBI:30013"/>
        <dbReference type="ChEBI" id="CHEBI:30616"/>
        <dbReference type="ChEBI" id="CHEBI:61977"/>
        <dbReference type="ChEBI" id="CHEBI:456216"/>
        <dbReference type="EC" id="2.7.11.1"/>
    </reaction>
</comment>
<comment type="similarity">
    <text evidence="5">Belongs to the protein kinase superfamily. TKL Ser/Thr protein kinase family.</text>
</comment>
<evidence type="ECO:0000255" key="1">
    <source>
        <dbReference type="PROSITE-ProRule" id="PRU00125"/>
    </source>
</evidence>
<evidence type="ECO:0000255" key="2">
    <source>
        <dbReference type="PROSITE-ProRule" id="PRU00159"/>
    </source>
</evidence>
<evidence type="ECO:0000255" key="3">
    <source>
        <dbReference type="PROSITE-ProRule" id="PRU10027"/>
    </source>
</evidence>
<evidence type="ECO:0000256" key="4">
    <source>
        <dbReference type="SAM" id="MobiDB-lite"/>
    </source>
</evidence>
<evidence type="ECO:0000305" key="5"/>
<keyword id="KW-0067">ATP-binding</keyword>
<keyword id="KW-0418">Kinase</keyword>
<keyword id="KW-0440">LIM domain</keyword>
<keyword id="KW-0479">Metal-binding</keyword>
<keyword id="KW-0547">Nucleotide-binding</keyword>
<keyword id="KW-1185">Reference proteome</keyword>
<keyword id="KW-0677">Repeat</keyword>
<keyword id="KW-0723">Serine/threonine-protein kinase</keyword>
<keyword id="KW-0808">Transferase</keyword>
<keyword id="KW-0862">Zinc</keyword>
<dbReference type="EC" id="2.7.11.1"/>
<dbReference type="EMBL" id="AAFI02000095">
    <property type="protein sequence ID" value="EAL63927.1"/>
    <property type="molecule type" value="Genomic_DNA"/>
</dbReference>
<dbReference type="RefSeq" id="XP_637432.1">
    <property type="nucleotide sequence ID" value="XM_632340.1"/>
</dbReference>
<dbReference type="SMR" id="Q54L00"/>
<dbReference type="STRING" id="44689.Q54L00"/>
<dbReference type="PaxDb" id="44689-DDB0229940"/>
<dbReference type="EnsemblProtists" id="EAL63927">
    <property type="protein sequence ID" value="EAL63927"/>
    <property type="gene ID" value="DDB_G0287001"/>
</dbReference>
<dbReference type="GeneID" id="8625901"/>
<dbReference type="KEGG" id="ddi:DDB_G0287001"/>
<dbReference type="dictyBase" id="DDB_G0287001"/>
<dbReference type="VEuPathDB" id="AmoebaDB:DDB_G0287001"/>
<dbReference type="eggNOG" id="KOG0192">
    <property type="taxonomic scope" value="Eukaryota"/>
</dbReference>
<dbReference type="HOGENOM" id="CLU_421771_0_0_1"/>
<dbReference type="InParanoid" id="Q54L00"/>
<dbReference type="OMA" id="QRICDGQ"/>
<dbReference type="PRO" id="PR:Q54L00"/>
<dbReference type="Proteomes" id="UP000002195">
    <property type="component" value="Chromosome 4"/>
</dbReference>
<dbReference type="GO" id="GO:0005737">
    <property type="term" value="C:cytoplasm"/>
    <property type="evidence" value="ECO:0000318"/>
    <property type="project" value="GO_Central"/>
</dbReference>
<dbReference type="GO" id="GO:0005524">
    <property type="term" value="F:ATP binding"/>
    <property type="evidence" value="ECO:0007669"/>
    <property type="project" value="UniProtKB-KW"/>
</dbReference>
<dbReference type="GO" id="GO:0046872">
    <property type="term" value="F:metal ion binding"/>
    <property type="evidence" value="ECO:0007669"/>
    <property type="project" value="UniProtKB-KW"/>
</dbReference>
<dbReference type="GO" id="GO:0004672">
    <property type="term" value="F:protein kinase activity"/>
    <property type="evidence" value="ECO:0000318"/>
    <property type="project" value="GO_Central"/>
</dbReference>
<dbReference type="GO" id="GO:0106310">
    <property type="term" value="F:protein serine kinase activity"/>
    <property type="evidence" value="ECO:0007669"/>
    <property type="project" value="RHEA"/>
</dbReference>
<dbReference type="GO" id="GO:0004674">
    <property type="term" value="F:protein serine/threonine kinase activity"/>
    <property type="evidence" value="ECO:0007669"/>
    <property type="project" value="UniProtKB-KW"/>
</dbReference>
<dbReference type="GO" id="GO:0007165">
    <property type="term" value="P:signal transduction"/>
    <property type="evidence" value="ECO:0000318"/>
    <property type="project" value="GO_Central"/>
</dbReference>
<dbReference type="CDD" id="cd08368">
    <property type="entry name" value="LIM"/>
    <property type="match status" value="1"/>
</dbReference>
<dbReference type="CDD" id="cd13999">
    <property type="entry name" value="STKc_MAP3K-like"/>
    <property type="match status" value="1"/>
</dbReference>
<dbReference type="Gene3D" id="2.10.110.10">
    <property type="entry name" value="Cysteine Rich Protein"/>
    <property type="match status" value="2"/>
</dbReference>
<dbReference type="Gene3D" id="1.10.510.10">
    <property type="entry name" value="Transferase(Phosphotransferase) domain 1"/>
    <property type="match status" value="1"/>
</dbReference>
<dbReference type="InterPro" id="IPR011009">
    <property type="entry name" value="Kinase-like_dom_sf"/>
</dbReference>
<dbReference type="InterPro" id="IPR000719">
    <property type="entry name" value="Prot_kinase_dom"/>
</dbReference>
<dbReference type="InterPro" id="IPR001245">
    <property type="entry name" value="Ser-Thr/Tyr_kinase_cat_dom"/>
</dbReference>
<dbReference type="InterPro" id="IPR008271">
    <property type="entry name" value="Ser/Thr_kinase_AS"/>
</dbReference>
<dbReference type="InterPro" id="IPR051681">
    <property type="entry name" value="Ser/Thr_Kinases-Pseudokinases"/>
</dbReference>
<dbReference type="InterPro" id="IPR001781">
    <property type="entry name" value="Znf_LIM"/>
</dbReference>
<dbReference type="PANTHER" id="PTHR44329:SF288">
    <property type="entry name" value="MITOGEN-ACTIVATED PROTEIN KINASE KINASE KINASE 20"/>
    <property type="match status" value="1"/>
</dbReference>
<dbReference type="PANTHER" id="PTHR44329">
    <property type="entry name" value="SERINE/THREONINE-PROTEIN KINASE TNNI3K-RELATED"/>
    <property type="match status" value="1"/>
</dbReference>
<dbReference type="Pfam" id="PF00412">
    <property type="entry name" value="LIM"/>
    <property type="match status" value="2"/>
</dbReference>
<dbReference type="Pfam" id="PF07714">
    <property type="entry name" value="PK_Tyr_Ser-Thr"/>
    <property type="match status" value="1"/>
</dbReference>
<dbReference type="PRINTS" id="PR00109">
    <property type="entry name" value="TYRKINASE"/>
</dbReference>
<dbReference type="SMART" id="SM00132">
    <property type="entry name" value="LIM"/>
    <property type="match status" value="2"/>
</dbReference>
<dbReference type="SMART" id="SM00220">
    <property type="entry name" value="S_TKc"/>
    <property type="match status" value="1"/>
</dbReference>
<dbReference type="SUPFAM" id="SSF57716">
    <property type="entry name" value="Glucocorticoid receptor-like (DNA-binding domain)"/>
    <property type="match status" value="1"/>
</dbReference>
<dbReference type="SUPFAM" id="SSF56112">
    <property type="entry name" value="Protein kinase-like (PK-like)"/>
    <property type="match status" value="1"/>
</dbReference>
<dbReference type="PROSITE" id="PS00478">
    <property type="entry name" value="LIM_DOMAIN_1"/>
    <property type="match status" value="2"/>
</dbReference>
<dbReference type="PROSITE" id="PS50023">
    <property type="entry name" value="LIM_DOMAIN_2"/>
    <property type="match status" value="2"/>
</dbReference>
<dbReference type="PROSITE" id="PS50011">
    <property type="entry name" value="PROTEIN_KINASE_DOM"/>
    <property type="match status" value="1"/>
</dbReference>
<dbReference type="PROSITE" id="PS00108">
    <property type="entry name" value="PROTEIN_KINASE_ST"/>
    <property type="match status" value="1"/>
</dbReference>
<organism>
    <name type="scientific">Dictyostelium discoideum</name>
    <name type="common">Social amoeba</name>
    <dbReference type="NCBI Taxonomy" id="44689"/>
    <lineage>
        <taxon>Eukaryota</taxon>
        <taxon>Amoebozoa</taxon>
        <taxon>Evosea</taxon>
        <taxon>Eumycetozoa</taxon>
        <taxon>Dictyostelia</taxon>
        <taxon>Dictyosteliales</taxon>
        <taxon>Dictyosteliaceae</taxon>
        <taxon>Dictyostelium</taxon>
    </lineage>
</organism>
<feature type="chain" id="PRO_0000328052" description="Probable LIM domain-containing serine/threonine-protein kinase DDB_G0287001">
    <location>
        <begin position="1"/>
        <end position="650"/>
    </location>
</feature>
<feature type="domain" description="LIM zinc-binding 1" evidence="1">
    <location>
        <begin position="4"/>
        <end position="63"/>
    </location>
</feature>
<feature type="domain" description="LIM zinc-binding 2" evidence="1">
    <location>
        <begin position="64"/>
        <end position="122"/>
    </location>
</feature>
<feature type="domain" description="Protein kinase" evidence="2">
    <location>
        <begin position="386"/>
        <end position="643"/>
    </location>
</feature>
<feature type="region of interest" description="Disordered" evidence="4">
    <location>
        <begin position="118"/>
        <end position="138"/>
    </location>
</feature>
<feature type="region of interest" description="Disordered" evidence="4">
    <location>
        <begin position="171"/>
        <end position="197"/>
    </location>
</feature>
<feature type="region of interest" description="Disordered" evidence="4">
    <location>
        <begin position="293"/>
        <end position="320"/>
    </location>
</feature>
<feature type="compositionally biased region" description="Gly residues" evidence="4">
    <location>
        <begin position="173"/>
        <end position="188"/>
    </location>
</feature>
<feature type="active site" description="Proton acceptor" evidence="2 3">
    <location>
        <position position="509"/>
    </location>
</feature>
<feature type="binding site" evidence="2">
    <location>
        <begin position="392"/>
        <end position="400"/>
    </location>
    <ligand>
        <name>ATP</name>
        <dbReference type="ChEBI" id="CHEBI:30616"/>
    </ligand>
</feature>
<feature type="binding site" evidence="2">
    <location>
        <position position="413"/>
    </location>
    <ligand>
        <name>ATP</name>
        <dbReference type="ChEBI" id="CHEBI:30616"/>
    </ligand>
</feature>
<sequence>MDTNNCGVCKTIVNPGSERVKAGTSVFHAKCFVCKECKNELESFIRSKDGSLICDECDIKLNARKCFKCQLPIQSTIVTARGKSFHNDCFNCASCEKIIKGGFFFVEGEFYCSTCDAKPSDKTKTTTPPPSEIPLPGKSGVSLANGVEIQVPNNSTNIIYVLNTNESSNGLSSSGGSGNSISGSGGTNTGSSTSSFMIHKRNNSNELNVVTPTATTTVDLLTSSTTTTPTLSPSTLSPPISTARFSNDYLISLQDDIYAKQQQQLLLLQQQQIQIQQQLQQQQLEILQKNQSLLNSSSPSPSTSSTSSTSSISQSQNLNTSQPNITQQLSNLNISNQKNGEIEKYIPKINGKTLTELLKHQSFDDILGEVLSKKISIYKELSKEEVAFGDVIASGASGKVYKGIYKGRDVAIKVYSSENFCFNIEEFDREVTIMSLIDSDHPNFTRFYGANKQNKKYLFHVSELVKSGSLRDLLLDKEKPLAYFTQLSIASDIANAMKHLHSIGVIHRDLKSLNVLITEDFTAKVIDFGTSRNVDLAKQMTLNLGTSCYMSPELFKGNGYDETCDVYAFGIVLWEIIARKEPYENINSWSIPVLVAKGERPTIPADCPSEYSKLIKACWTDKPKKRPSFKEICDTLKKISESLTLKRNKK</sequence>
<proteinExistence type="inferred from homology"/>
<name>LIMKA_DICDI</name>
<gene>
    <name type="ORF">DDB_G0287001</name>
</gene>
<protein>
    <recommendedName>
        <fullName>Probable LIM domain-containing serine/threonine-protein kinase DDB_G0287001</fullName>
        <ecNumber>2.7.11.1</ecNumber>
    </recommendedName>
</protein>